<protein>
    <recommendedName>
        <fullName evidence="1">Probable septum site-determining protein MinC</fullName>
    </recommendedName>
</protein>
<proteinExistence type="inferred from homology"/>
<feature type="chain" id="PRO_1000047852" description="Probable septum site-determining protein MinC">
    <location>
        <begin position="1"/>
        <end position="235"/>
    </location>
</feature>
<feature type="region of interest" description="Disordered" evidence="2">
    <location>
        <begin position="104"/>
        <end position="125"/>
    </location>
</feature>
<feature type="compositionally biased region" description="Pro residues" evidence="2">
    <location>
        <begin position="110"/>
        <end position="119"/>
    </location>
</feature>
<comment type="function">
    <text evidence="1">Cell division inhibitor that blocks the formation of polar Z ring septums. Rapidly oscillates between the poles of the cell to destabilize FtsZ filaments that have formed before they mature into polar Z rings. Prevents FtsZ polymerization.</text>
</comment>
<comment type="subunit">
    <text evidence="1">Interacts with MinD and FtsZ.</text>
</comment>
<comment type="similarity">
    <text evidence="1">Belongs to the MinC family.</text>
</comment>
<evidence type="ECO:0000255" key="1">
    <source>
        <dbReference type="HAMAP-Rule" id="MF_00267"/>
    </source>
</evidence>
<evidence type="ECO:0000256" key="2">
    <source>
        <dbReference type="SAM" id="MobiDB-lite"/>
    </source>
</evidence>
<organism>
    <name type="scientific">Salmonella choleraesuis (strain SC-B67)</name>
    <dbReference type="NCBI Taxonomy" id="321314"/>
    <lineage>
        <taxon>Bacteria</taxon>
        <taxon>Pseudomonadati</taxon>
        <taxon>Pseudomonadota</taxon>
        <taxon>Gammaproteobacteria</taxon>
        <taxon>Enterobacterales</taxon>
        <taxon>Enterobacteriaceae</taxon>
        <taxon>Salmonella</taxon>
    </lineage>
</organism>
<accession>Q57NJ8</accession>
<keyword id="KW-0131">Cell cycle</keyword>
<keyword id="KW-0132">Cell division</keyword>
<keyword id="KW-0717">Septation</keyword>
<dbReference type="EMBL" id="AE017220">
    <property type="protein sequence ID" value="AAX65713.1"/>
    <property type="molecule type" value="Genomic_DNA"/>
</dbReference>
<dbReference type="RefSeq" id="WP_000072527.1">
    <property type="nucleotide sequence ID" value="NC_006905.1"/>
</dbReference>
<dbReference type="SMR" id="Q57NJ8"/>
<dbReference type="KEGG" id="sec:SCH_1807"/>
<dbReference type="HOGENOM" id="CLU_067812_0_1_6"/>
<dbReference type="Proteomes" id="UP000000538">
    <property type="component" value="Chromosome"/>
</dbReference>
<dbReference type="GO" id="GO:0000902">
    <property type="term" value="P:cell morphogenesis"/>
    <property type="evidence" value="ECO:0007669"/>
    <property type="project" value="InterPro"/>
</dbReference>
<dbReference type="GO" id="GO:0000917">
    <property type="term" value="P:division septum assembly"/>
    <property type="evidence" value="ECO:0007669"/>
    <property type="project" value="UniProtKB-KW"/>
</dbReference>
<dbReference type="GO" id="GO:0051302">
    <property type="term" value="P:regulation of cell division"/>
    <property type="evidence" value="ECO:0007669"/>
    <property type="project" value="InterPro"/>
</dbReference>
<dbReference type="GO" id="GO:1901891">
    <property type="term" value="P:regulation of cell septum assembly"/>
    <property type="evidence" value="ECO:0007669"/>
    <property type="project" value="InterPro"/>
</dbReference>
<dbReference type="FunFam" id="2.160.20.70:FF:000002">
    <property type="entry name" value="Probable septum site-determining protein MinC"/>
    <property type="match status" value="1"/>
</dbReference>
<dbReference type="Gene3D" id="2.160.20.70">
    <property type="match status" value="1"/>
</dbReference>
<dbReference type="Gene3D" id="3.30.70.260">
    <property type="match status" value="1"/>
</dbReference>
<dbReference type="HAMAP" id="MF_00267">
    <property type="entry name" value="MinC"/>
    <property type="match status" value="1"/>
</dbReference>
<dbReference type="InterPro" id="IPR016098">
    <property type="entry name" value="CAP/MinC_C"/>
</dbReference>
<dbReference type="InterPro" id="IPR013033">
    <property type="entry name" value="MinC"/>
</dbReference>
<dbReference type="InterPro" id="IPR036145">
    <property type="entry name" value="MinC_C_sf"/>
</dbReference>
<dbReference type="InterPro" id="IPR007874">
    <property type="entry name" value="MinC_N"/>
</dbReference>
<dbReference type="InterPro" id="IPR005526">
    <property type="entry name" value="Septum_form_inhib_MinC_C"/>
</dbReference>
<dbReference type="NCBIfam" id="TIGR01222">
    <property type="entry name" value="minC"/>
    <property type="match status" value="1"/>
</dbReference>
<dbReference type="PANTHER" id="PTHR34108">
    <property type="entry name" value="SEPTUM SITE-DETERMINING PROTEIN MINC"/>
    <property type="match status" value="1"/>
</dbReference>
<dbReference type="PANTHER" id="PTHR34108:SF1">
    <property type="entry name" value="SEPTUM SITE-DETERMINING PROTEIN MINC"/>
    <property type="match status" value="1"/>
</dbReference>
<dbReference type="Pfam" id="PF03775">
    <property type="entry name" value="MinC_C"/>
    <property type="match status" value="1"/>
</dbReference>
<dbReference type="Pfam" id="PF05209">
    <property type="entry name" value="MinC_N"/>
    <property type="match status" value="1"/>
</dbReference>
<dbReference type="SUPFAM" id="SSF63848">
    <property type="entry name" value="Cell-division inhibitor MinC, C-terminal domain"/>
    <property type="match status" value="1"/>
</dbReference>
<sequence>MSNTPIELKGSSFTLSVVHLHEAEPEVIRQALEDKIAQAPAFLKHAPVVINVSGLESPVNWPELHKIVTSTGLRIIGVSGCKDASLKVEIDRMGLPLLTEGKEKAVRPAPVEPATPSEPPQNANPITKTRLIDVPVRSGQRIYAPQCDLIVTSHVSAGAELIADGNIHVYGMMRGRALAGASGDREAQIFCTHLTAELVSIAGVYWLSDKIPAEFYGKAARLRLADNALTVQPLN</sequence>
<gene>
    <name evidence="1" type="primary">minC</name>
    <name type="ordered locus">SCH_1807</name>
</gene>
<reference key="1">
    <citation type="journal article" date="2005" name="Nucleic Acids Res.">
        <title>The genome sequence of Salmonella enterica serovar Choleraesuis, a highly invasive and resistant zoonotic pathogen.</title>
        <authorList>
            <person name="Chiu C.-H."/>
            <person name="Tang P."/>
            <person name="Chu C."/>
            <person name="Hu S."/>
            <person name="Bao Q."/>
            <person name="Yu J."/>
            <person name="Chou Y.-Y."/>
            <person name="Wang H.-S."/>
            <person name="Lee Y.-S."/>
        </authorList>
    </citation>
    <scope>NUCLEOTIDE SEQUENCE [LARGE SCALE GENOMIC DNA]</scope>
    <source>
        <strain>SC-B67</strain>
    </source>
</reference>
<name>MINC_SALCH</name>